<evidence type="ECO:0000250" key="1"/>
<evidence type="ECO:0000255" key="2"/>
<evidence type="ECO:0000269" key="3">
    <source>
    </source>
</evidence>
<evidence type="ECO:0000305" key="4"/>
<keyword id="KW-1003">Cell membrane</keyword>
<keyword id="KW-0472">Membrane</keyword>
<keyword id="KW-1185">Reference proteome</keyword>
<keyword id="KW-0812">Transmembrane</keyword>
<keyword id="KW-1133">Transmembrane helix</keyword>
<gene>
    <name type="ordered locus">At3g53850</name>
    <name type="ORF">F3L17_30</name>
</gene>
<sequence length="154" mass="16534">MKKLLGGPGTVCGLLLRIGQCASAAASIGVMVSAKEFSVHTAFCYLIASMGLQLLWSFGLACLDVYALRGKKDLQNPILVSLFVVGDWVTAMLSLAAACSSAGVVVLYEKDIKYCNTQSQYPCLRYEVAVALSFVTWIQIAVSSHVTFWILASV</sequence>
<comment type="subunit">
    <text evidence="1">Homodimer and heterodimers.</text>
</comment>
<comment type="subcellular location">
    <subcellularLocation>
        <location evidence="1">Cell membrane</location>
        <topology evidence="1">Multi-pass membrane protein</topology>
    </subcellularLocation>
</comment>
<comment type="tissue specificity">
    <text evidence="3">Expressed in the stele of the root.</text>
</comment>
<comment type="developmental stage">
    <text evidence="3">In 4-days-old seedlings, confined to the root meristematic zone and in young leaves. In roots of 10-days-old seedlings, also detected in lateral root primordia, and in the stele in proximity to the hypocotyl.</text>
</comment>
<comment type="similarity">
    <text evidence="4">Belongs to the Casparian strip membrane proteins (CASP) family.</text>
</comment>
<comment type="sequence caution" evidence="4">
    <conflict type="erroneous gene model prediction">
        <sequence resource="EMBL-CDS" id="CAB88347"/>
    </conflict>
</comment>
<proteinExistence type="evidence at transcript level"/>
<organism>
    <name type="scientific">Arabidopsis thaliana</name>
    <name type="common">Mouse-ear cress</name>
    <dbReference type="NCBI Taxonomy" id="3702"/>
    <lineage>
        <taxon>Eukaryota</taxon>
        <taxon>Viridiplantae</taxon>
        <taxon>Streptophyta</taxon>
        <taxon>Embryophyta</taxon>
        <taxon>Tracheophyta</taxon>
        <taxon>Spermatophyta</taxon>
        <taxon>Magnoliopsida</taxon>
        <taxon>eudicotyledons</taxon>
        <taxon>Gunneridae</taxon>
        <taxon>Pentapetalae</taxon>
        <taxon>rosids</taxon>
        <taxon>malvids</taxon>
        <taxon>Brassicales</taxon>
        <taxon>Brassicaceae</taxon>
        <taxon>Camelineae</taxon>
        <taxon>Arabidopsis</taxon>
    </lineage>
</organism>
<dbReference type="EMBL" id="AL132960">
    <property type="protein sequence ID" value="CAB88347.1"/>
    <property type="status" value="ALT_SEQ"/>
    <property type="molecule type" value="Genomic_DNA"/>
</dbReference>
<dbReference type="EMBL" id="CP002686">
    <property type="protein sequence ID" value="AEE79150.1"/>
    <property type="molecule type" value="Genomic_DNA"/>
</dbReference>
<dbReference type="EMBL" id="CP002686">
    <property type="protein sequence ID" value="ANM65278.1"/>
    <property type="molecule type" value="Genomic_DNA"/>
</dbReference>
<dbReference type="EMBL" id="AF412058">
    <property type="protein sequence ID" value="AAL06511.1"/>
    <property type="molecule type" value="mRNA"/>
</dbReference>
<dbReference type="EMBL" id="AY120697">
    <property type="protein sequence ID" value="AAM52240.1"/>
    <property type="molecule type" value="mRNA"/>
</dbReference>
<dbReference type="PIR" id="T45925">
    <property type="entry name" value="T45925"/>
</dbReference>
<dbReference type="RefSeq" id="NP_001327256.1">
    <property type="nucleotide sequence ID" value="NM_001339639.1"/>
</dbReference>
<dbReference type="RefSeq" id="NP_566990.1">
    <property type="nucleotide sequence ID" value="NM_115245.3"/>
</dbReference>
<dbReference type="FunCoup" id="Q945M8">
    <property type="interactions" value="1030"/>
</dbReference>
<dbReference type="PaxDb" id="3702-AT3G53850.1"/>
<dbReference type="EnsemblPlants" id="AT3G53850.1">
    <property type="protein sequence ID" value="AT3G53850.1"/>
    <property type="gene ID" value="AT3G53850"/>
</dbReference>
<dbReference type="EnsemblPlants" id="AT3G53850.2">
    <property type="protein sequence ID" value="AT3G53850.2"/>
    <property type="gene ID" value="AT3G53850"/>
</dbReference>
<dbReference type="GeneID" id="824552"/>
<dbReference type="Gramene" id="AT3G53850.1">
    <property type="protein sequence ID" value="AT3G53850.1"/>
    <property type="gene ID" value="AT3G53850"/>
</dbReference>
<dbReference type="Gramene" id="AT3G53850.2">
    <property type="protein sequence ID" value="AT3G53850.2"/>
    <property type="gene ID" value="AT3G53850"/>
</dbReference>
<dbReference type="KEGG" id="ath:AT3G53850"/>
<dbReference type="Araport" id="AT3G53850"/>
<dbReference type="TAIR" id="AT3G53850">
    <property type="gene designation" value="CASPL5B2"/>
</dbReference>
<dbReference type="eggNOG" id="ENOG502RXNM">
    <property type="taxonomic scope" value="Eukaryota"/>
</dbReference>
<dbReference type="HOGENOM" id="CLU_103961_1_0_1"/>
<dbReference type="InParanoid" id="Q945M8"/>
<dbReference type="OMA" id="HTAFCYL"/>
<dbReference type="OrthoDB" id="754299at2759"/>
<dbReference type="PhylomeDB" id="Q945M8"/>
<dbReference type="PRO" id="PR:Q945M8"/>
<dbReference type="Proteomes" id="UP000006548">
    <property type="component" value="Chromosome 3"/>
</dbReference>
<dbReference type="ExpressionAtlas" id="Q945M8">
    <property type="expression patterns" value="baseline and differential"/>
</dbReference>
<dbReference type="GO" id="GO:0005886">
    <property type="term" value="C:plasma membrane"/>
    <property type="evidence" value="ECO:0007669"/>
    <property type="project" value="UniProtKB-SubCell"/>
</dbReference>
<dbReference type="InterPro" id="IPR006702">
    <property type="entry name" value="CASP_dom"/>
</dbReference>
<dbReference type="InterPro" id="IPR045009">
    <property type="entry name" value="CASPL-5"/>
</dbReference>
<dbReference type="PANTHER" id="PTHR32021:SF0">
    <property type="entry name" value="CASP-LIKE PROTEIN 5B2"/>
    <property type="match status" value="1"/>
</dbReference>
<dbReference type="PANTHER" id="PTHR32021">
    <property type="entry name" value="CASP-LIKE PROTEIN 5B3"/>
    <property type="match status" value="1"/>
</dbReference>
<dbReference type="Pfam" id="PF04535">
    <property type="entry name" value="CASP_dom"/>
    <property type="match status" value="1"/>
</dbReference>
<reference key="1">
    <citation type="journal article" date="2000" name="Nature">
        <title>Sequence and analysis of chromosome 3 of the plant Arabidopsis thaliana.</title>
        <authorList>
            <person name="Salanoubat M."/>
            <person name="Lemcke K."/>
            <person name="Rieger M."/>
            <person name="Ansorge W."/>
            <person name="Unseld M."/>
            <person name="Fartmann B."/>
            <person name="Valle G."/>
            <person name="Bloecker H."/>
            <person name="Perez-Alonso M."/>
            <person name="Obermaier B."/>
            <person name="Delseny M."/>
            <person name="Boutry M."/>
            <person name="Grivell L.A."/>
            <person name="Mache R."/>
            <person name="Puigdomenech P."/>
            <person name="De Simone V."/>
            <person name="Choisne N."/>
            <person name="Artiguenave F."/>
            <person name="Robert C."/>
            <person name="Brottier P."/>
            <person name="Wincker P."/>
            <person name="Cattolico L."/>
            <person name="Weissenbach J."/>
            <person name="Saurin W."/>
            <person name="Quetier F."/>
            <person name="Schaefer M."/>
            <person name="Mueller-Auer S."/>
            <person name="Gabel C."/>
            <person name="Fuchs M."/>
            <person name="Benes V."/>
            <person name="Wurmbach E."/>
            <person name="Drzonek H."/>
            <person name="Erfle H."/>
            <person name="Jordan N."/>
            <person name="Bangert S."/>
            <person name="Wiedelmann R."/>
            <person name="Kranz H."/>
            <person name="Voss H."/>
            <person name="Holland R."/>
            <person name="Brandt P."/>
            <person name="Nyakatura G."/>
            <person name="Vezzi A."/>
            <person name="D'Angelo M."/>
            <person name="Pallavicini A."/>
            <person name="Toppo S."/>
            <person name="Simionati B."/>
            <person name="Conrad A."/>
            <person name="Hornischer K."/>
            <person name="Kauer G."/>
            <person name="Loehnert T.-H."/>
            <person name="Nordsiek G."/>
            <person name="Reichelt J."/>
            <person name="Scharfe M."/>
            <person name="Schoen O."/>
            <person name="Bargues M."/>
            <person name="Terol J."/>
            <person name="Climent J."/>
            <person name="Navarro P."/>
            <person name="Collado C."/>
            <person name="Perez-Perez A."/>
            <person name="Ottenwaelder B."/>
            <person name="Duchemin D."/>
            <person name="Cooke R."/>
            <person name="Laudie M."/>
            <person name="Berger-Llauro C."/>
            <person name="Purnelle B."/>
            <person name="Masuy D."/>
            <person name="de Haan M."/>
            <person name="Maarse A.C."/>
            <person name="Alcaraz J.-P."/>
            <person name="Cottet A."/>
            <person name="Casacuberta E."/>
            <person name="Monfort A."/>
            <person name="Argiriou A."/>
            <person name="Flores M."/>
            <person name="Liguori R."/>
            <person name="Vitale D."/>
            <person name="Mannhaupt G."/>
            <person name="Haase D."/>
            <person name="Schoof H."/>
            <person name="Rudd S."/>
            <person name="Zaccaria P."/>
            <person name="Mewes H.-W."/>
            <person name="Mayer K.F.X."/>
            <person name="Kaul S."/>
            <person name="Town C.D."/>
            <person name="Koo H.L."/>
            <person name="Tallon L.J."/>
            <person name="Jenkins J."/>
            <person name="Rooney T."/>
            <person name="Rizzo M."/>
            <person name="Walts A."/>
            <person name="Utterback T."/>
            <person name="Fujii C.Y."/>
            <person name="Shea T.P."/>
            <person name="Creasy T.H."/>
            <person name="Haas B."/>
            <person name="Maiti R."/>
            <person name="Wu D."/>
            <person name="Peterson J."/>
            <person name="Van Aken S."/>
            <person name="Pai G."/>
            <person name="Militscher J."/>
            <person name="Sellers P."/>
            <person name="Gill J.E."/>
            <person name="Feldblyum T.V."/>
            <person name="Preuss D."/>
            <person name="Lin X."/>
            <person name="Nierman W.C."/>
            <person name="Salzberg S.L."/>
            <person name="White O."/>
            <person name="Venter J.C."/>
            <person name="Fraser C.M."/>
            <person name="Kaneko T."/>
            <person name="Nakamura Y."/>
            <person name="Sato S."/>
            <person name="Kato T."/>
            <person name="Asamizu E."/>
            <person name="Sasamoto S."/>
            <person name="Kimura T."/>
            <person name="Idesawa K."/>
            <person name="Kawashima K."/>
            <person name="Kishida Y."/>
            <person name="Kiyokawa C."/>
            <person name="Kohara M."/>
            <person name="Matsumoto M."/>
            <person name="Matsuno A."/>
            <person name="Muraki A."/>
            <person name="Nakayama S."/>
            <person name="Nakazaki N."/>
            <person name="Shinpo S."/>
            <person name="Takeuchi C."/>
            <person name="Wada T."/>
            <person name="Watanabe A."/>
            <person name="Yamada M."/>
            <person name="Yasuda M."/>
            <person name="Tabata S."/>
        </authorList>
    </citation>
    <scope>NUCLEOTIDE SEQUENCE [LARGE SCALE GENOMIC DNA]</scope>
    <source>
        <strain>cv. Columbia</strain>
    </source>
</reference>
<reference key="2">
    <citation type="journal article" date="2017" name="Plant J.">
        <title>Araport11: a complete reannotation of the Arabidopsis thaliana reference genome.</title>
        <authorList>
            <person name="Cheng C.Y."/>
            <person name="Krishnakumar V."/>
            <person name="Chan A.P."/>
            <person name="Thibaud-Nissen F."/>
            <person name="Schobel S."/>
            <person name="Town C.D."/>
        </authorList>
    </citation>
    <scope>GENOME REANNOTATION</scope>
    <source>
        <strain>cv. Columbia</strain>
    </source>
</reference>
<reference key="3">
    <citation type="journal article" date="2003" name="Science">
        <title>Empirical analysis of transcriptional activity in the Arabidopsis genome.</title>
        <authorList>
            <person name="Yamada K."/>
            <person name="Lim J."/>
            <person name="Dale J.M."/>
            <person name="Chen H."/>
            <person name="Shinn P."/>
            <person name="Palm C.J."/>
            <person name="Southwick A.M."/>
            <person name="Wu H.C."/>
            <person name="Kim C.J."/>
            <person name="Nguyen M."/>
            <person name="Pham P.K."/>
            <person name="Cheuk R.F."/>
            <person name="Karlin-Newmann G."/>
            <person name="Liu S.X."/>
            <person name="Lam B."/>
            <person name="Sakano H."/>
            <person name="Wu T."/>
            <person name="Yu G."/>
            <person name="Miranda M."/>
            <person name="Quach H.L."/>
            <person name="Tripp M."/>
            <person name="Chang C.H."/>
            <person name="Lee J.M."/>
            <person name="Toriumi M.J."/>
            <person name="Chan M.M."/>
            <person name="Tang C.C."/>
            <person name="Onodera C.S."/>
            <person name="Deng J.M."/>
            <person name="Akiyama K."/>
            <person name="Ansari Y."/>
            <person name="Arakawa T."/>
            <person name="Banh J."/>
            <person name="Banno F."/>
            <person name="Bowser L."/>
            <person name="Brooks S.Y."/>
            <person name="Carninci P."/>
            <person name="Chao Q."/>
            <person name="Choy N."/>
            <person name="Enju A."/>
            <person name="Goldsmith A.D."/>
            <person name="Gurjal M."/>
            <person name="Hansen N.F."/>
            <person name="Hayashizaki Y."/>
            <person name="Johnson-Hopson C."/>
            <person name="Hsuan V.W."/>
            <person name="Iida K."/>
            <person name="Karnes M."/>
            <person name="Khan S."/>
            <person name="Koesema E."/>
            <person name="Ishida J."/>
            <person name="Jiang P.X."/>
            <person name="Jones T."/>
            <person name="Kawai J."/>
            <person name="Kamiya A."/>
            <person name="Meyers C."/>
            <person name="Nakajima M."/>
            <person name="Narusaka M."/>
            <person name="Seki M."/>
            <person name="Sakurai T."/>
            <person name="Satou M."/>
            <person name="Tamse R."/>
            <person name="Vaysberg M."/>
            <person name="Wallender E.K."/>
            <person name="Wong C."/>
            <person name="Yamamura Y."/>
            <person name="Yuan S."/>
            <person name="Shinozaki K."/>
            <person name="Davis R.W."/>
            <person name="Theologis A."/>
            <person name="Ecker J.R."/>
        </authorList>
    </citation>
    <scope>NUCLEOTIDE SEQUENCE [LARGE SCALE MRNA]</scope>
    <source>
        <strain>cv. Columbia</strain>
    </source>
</reference>
<reference key="4">
    <citation type="journal article" date="2014" name="Plant Physiol.">
        <title>Functional and evolutionary analysis of the CASPARIAN STRIP MEMBRANE DOMAIN PROTEIN family.</title>
        <authorList>
            <person name="Roppolo D."/>
            <person name="Boeckmann B."/>
            <person name="Pfister A."/>
            <person name="Boutet E."/>
            <person name="Rubio M.C."/>
            <person name="Denervaud-Tendon V."/>
            <person name="Vermeer J.E."/>
            <person name="Gheyselinck J."/>
            <person name="Xenarios I."/>
            <person name="Geldner N."/>
        </authorList>
    </citation>
    <scope>TISSUE SPECIFICITY</scope>
    <scope>DEVELOPMENTAL STAGE</scope>
    <scope>GENE FAMILY</scope>
    <scope>NOMENCLATURE</scope>
</reference>
<accession>Q945M8</accession>
<accession>Q9M341</accession>
<feature type="chain" id="PRO_0000308671" description="CASP-like protein 5B2">
    <location>
        <begin position="1"/>
        <end position="154"/>
    </location>
</feature>
<feature type="topological domain" description="Cytoplasmic" evidence="2">
    <location>
        <begin position="1"/>
        <end position="10"/>
    </location>
</feature>
<feature type="transmembrane region" description="Helical" evidence="2">
    <location>
        <begin position="11"/>
        <end position="31"/>
    </location>
</feature>
<feature type="topological domain" description="Extracellular" evidence="2">
    <location>
        <begin position="32"/>
        <end position="42"/>
    </location>
</feature>
<feature type="transmembrane region" description="Helical" evidence="2">
    <location>
        <begin position="43"/>
        <end position="63"/>
    </location>
</feature>
<feature type="topological domain" description="Cytoplasmic" evidence="2">
    <location>
        <begin position="64"/>
        <end position="77"/>
    </location>
</feature>
<feature type="transmembrane region" description="Helical" evidence="2">
    <location>
        <begin position="78"/>
        <end position="98"/>
    </location>
</feature>
<feature type="topological domain" description="Extracellular" evidence="2">
    <location>
        <begin position="99"/>
        <end position="129"/>
    </location>
</feature>
<feature type="transmembrane region" description="Helical" evidence="2">
    <location>
        <begin position="130"/>
        <end position="150"/>
    </location>
</feature>
<feature type="topological domain" description="Cytoplasmic" evidence="2">
    <location>
        <begin position="151"/>
        <end position="154"/>
    </location>
</feature>
<protein>
    <recommendedName>
        <fullName>CASP-like protein 5B2</fullName>
        <shortName>AtCASPL5B2</shortName>
    </recommendedName>
</protein>
<name>CSPLI_ARATH</name>